<proteinExistence type="evidence at protein level"/>
<dbReference type="EMBL" id="D89975">
    <property type="protein sequence ID" value="BAA14048.1"/>
    <property type="molecule type" value="Genomic_DNA"/>
</dbReference>
<dbReference type="EMBL" id="U00096">
    <property type="protein sequence ID" value="AAC74639.1"/>
    <property type="molecule type" value="Genomic_DNA"/>
</dbReference>
<dbReference type="EMBL" id="AP009048">
    <property type="protein sequence ID" value="BAE76472.1"/>
    <property type="molecule type" value="Genomic_DNA"/>
</dbReference>
<dbReference type="PIR" id="A64912">
    <property type="entry name" value="A64912"/>
</dbReference>
<dbReference type="RefSeq" id="NP_416084.1">
    <property type="nucleotide sequence ID" value="NC_000913.3"/>
</dbReference>
<dbReference type="RefSeq" id="WP_001301033.1">
    <property type="nucleotide sequence ID" value="NZ_SSUV01000001.1"/>
</dbReference>
<dbReference type="SMR" id="P77609"/>
<dbReference type="BioGRID" id="4260695">
    <property type="interactions" value="22"/>
</dbReference>
<dbReference type="BioGRID" id="851714">
    <property type="interactions" value="13"/>
</dbReference>
<dbReference type="DIP" id="DIP-9667N"/>
<dbReference type="FunCoup" id="P77609">
    <property type="interactions" value="57"/>
</dbReference>
<dbReference type="IntAct" id="P77609">
    <property type="interactions" value="27"/>
</dbReference>
<dbReference type="STRING" id="511145.b1566"/>
<dbReference type="PaxDb" id="511145-b1566"/>
<dbReference type="EnsemblBacteria" id="AAC74639">
    <property type="protein sequence ID" value="AAC74639"/>
    <property type="gene ID" value="b1566"/>
</dbReference>
<dbReference type="GeneID" id="947392"/>
<dbReference type="KEGG" id="ecj:JW1558"/>
<dbReference type="KEGG" id="eco:b1566"/>
<dbReference type="KEGG" id="ecoc:C3026_09030"/>
<dbReference type="PATRIC" id="fig|511145.12.peg.1638"/>
<dbReference type="EchoBASE" id="EB3203"/>
<dbReference type="HOGENOM" id="CLU_2222238_0_0_6"/>
<dbReference type="InParanoid" id="P77609"/>
<dbReference type="OrthoDB" id="6638119at2"/>
<dbReference type="BioCyc" id="EcoCyc:G6833-MONOMER"/>
<dbReference type="PRO" id="PR:P77609"/>
<dbReference type="Proteomes" id="UP000000625">
    <property type="component" value="Chromosome"/>
</dbReference>
<dbReference type="InterPro" id="IPR025577">
    <property type="entry name" value="FlxA"/>
</dbReference>
<dbReference type="Pfam" id="PF14282">
    <property type="entry name" value="FlxA"/>
    <property type="match status" value="1"/>
</dbReference>
<sequence length="110" mass="12208">MSVTIQGNTSTVISNNSAPEGTSEIAKITRQIQVLTEKLGKISSEEGMTTQQKKEMAALVQKQIESLWAQLEQLLRQQAEKKNEDATVQPDKKEEKKDDTNTAGTIDIYV</sequence>
<keyword id="KW-1185">Reference proteome</keyword>
<accession>P77609</accession>
<accession>Q2MB84</accession>
<gene>
    <name type="primary">flxA</name>
    <name type="ordered locus">b1566</name>
    <name type="ordered locus">JW1558</name>
</gene>
<reference key="1">
    <citation type="journal article" date="1997" name="Gene">
        <title>Identification of a novel Escherichia coli gene whose expression is dependent on the flagellum-specific sigma factor, FliA, but dispensable for motility development.</title>
        <authorList>
            <person name="Ide N."/>
            <person name="Kutsukake K."/>
        </authorList>
    </citation>
    <scope>NUCLEOTIDE SEQUENCE [GENOMIC DNA]</scope>
    <source>
        <strain>EJ500</strain>
    </source>
</reference>
<reference key="2">
    <citation type="journal article" date="1997" name="Science">
        <title>The complete genome sequence of Escherichia coli K-12.</title>
        <authorList>
            <person name="Blattner F.R."/>
            <person name="Plunkett G. III"/>
            <person name="Bloch C.A."/>
            <person name="Perna N.T."/>
            <person name="Burland V."/>
            <person name="Riley M."/>
            <person name="Collado-Vides J."/>
            <person name="Glasner J.D."/>
            <person name="Rode C.K."/>
            <person name="Mayhew G.F."/>
            <person name="Gregor J."/>
            <person name="Davis N.W."/>
            <person name="Kirkpatrick H.A."/>
            <person name="Goeden M.A."/>
            <person name="Rose D.J."/>
            <person name="Mau B."/>
            <person name="Shao Y."/>
        </authorList>
    </citation>
    <scope>NUCLEOTIDE SEQUENCE [LARGE SCALE GENOMIC DNA]</scope>
    <source>
        <strain>K12 / MG1655 / ATCC 47076</strain>
    </source>
</reference>
<reference key="3">
    <citation type="journal article" date="2006" name="Mol. Syst. Biol.">
        <title>Highly accurate genome sequences of Escherichia coli K-12 strains MG1655 and W3110.</title>
        <authorList>
            <person name="Hayashi K."/>
            <person name="Morooka N."/>
            <person name="Yamamoto Y."/>
            <person name="Fujita K."/>
            <person name="Isono K."/>
            <person name="Choi S."/>
            <person name="Ohtsubo E."/>
            <person name="Baba T."/>
            <person name="Wanner B.L."/>
            <person name="Mori H."/>
            <person name="Horiuchi T."/>
        </authorList>
    </citation>
    <scope>NUCLEOTIDE SEQUENCE [LARGE SCALE GENOMIC DNA]</scope>
    <source>
        <strain>K12 / W3110 / ATCC 27325 / DSM 5911</strain>
    </source>
</reference>
<evidence type="ECO:0000256" key="1">
    <source>
        <dbReference type="SAM" id="MobiDB-lite"/>
    </source>
</evidence>
<organism>
    <name type="scientific">Escherichia coli (strain K12)</name>
    <dbReference type="NCBI Taxonomy" id="83333"/>
    <lineage>
        <taxon>Bacteria</taxon>
        <taxon>Pseudomonadati</taxon>
        <taxon>Pseudomonadota</taxon>
        <taxon>Gammaproteobacteria</taxon>
        <taxon>Enterobacterales</taxon>
        <taxon>Enterobacteriaceae</taxon>
        <taxon>Escherichia</taxon>
    </lineage>
</organism>
<name>FLXA_ECOLI</name>
<feature type="chain" id="PRO_0000087311" description="Protein FlxA">
    <location>
        <begin position="1"/>
        <end position="110"/>
    </location>
</feature>
<feature type="region of interest" description="Disordered" evidence="1">
    <location>
        <begin position="1"/>
        <end position="23"/>
    </location>
</feature>
<feature type="region of interest" description="Disordered" evidence="1">
    <location>
        <begin position="78"/>
        <end position="110"/>
    </location>
</feature>
<feature type="compositionally biased region" description="Polar residues" evidence="1">
    <location>
        <begin position="1"/>
        <end position="20"/>
    </location>
</feature>
<feature type="compositionally biased region" description="Basic and acidic residues" evidence="1">
    <location>
        <begin position="78"/>
        <end position="100"/>
    </location>
</feature>
<protein>
    <recommendedName>
        <fullName>Protein FlxA</fullName>
    </recommendedName>
</protein>
<comment type="interaction">
    <interactant intactId="EBI-553024">
        <id>P77609</id>
    </interactant>
    <interactant intactId="EBI-553018">
        <id>P76555</id>
        <label>eutQ</label>
    </interactant>
    <organismsDiffer>false</organismsDiffer>
    <experiments>3</experiments>
</comment>
<comment type="interaction">
    <interactant intactId="EBI-553024">
        <id>P77609</id>
    </interactant>
    <interactant intactId="EBI-550404">
        <id>P0ABQ4</id>
        <label>folA</label>
    </interactant>
    <organismsDiffer>false</organismsDiffer>
    <experiments>4</experiments>
</comment>
<comment type="interaction">
    <interactant intactId="EBI-553024">
        <id>P77609</id>
    </interactant>
    <interactant intactId="EBI-553011">
        <id>P22939</id>
        <label>ispA</label>
    </interactant>
    <organismsDiffer>false</organismsDiffer>
    <experiments>6</experiments>
</comment>
<comment type="interaction">
    <interactant intactId="EBI-553024">
        <id>P77609</id>
    </interactant>
    <interactant intactId="EBI-554607">
        <id>P17952</id>
        <label>murC</label>
    </interactant>
    <organismsDiffer>false</organismsDiffer>
    <experiments>3</experiments>
</comment>